<proteinExistence type="inferred from homology"/>
<accession>A3MZV0</accession>
<dbReference type="EMBL" id="CP000569">
    <property type="protein sequence ID" value="ABN73686.1"/>
    <property type="molecule type" value="Genomic_DNA"/>
</dbReference>
<dbReference type="RefSeq" id="WP_005596816.1">
    <property type="nucleotide sequence ID" value="NC_009053.1"/>
</dbReference>
<dbReference type="SMR" id="A3MZV0"/>
<dbReference type="STRING" id="416269.APL_0584"/>
<dbReference type="EnsemblBacteria" id="ABN73686">
    <property type="protein sequence ID" value="ABN73686"/>
    <property type="gene ID" value="APL_0584"/>
</dbReference>
<dbReference type="KEGG" id="apl:APL_0584"/>
<dbReference type="eggNOG" id="COG3082">
    <property type="taxonomic scope" value="Bacteria"/>
</dbReference>
<dbReference type="HOGENOM" id="CLU_175457_0_0_6"/>
<dbReference type="Proteomes" id="UP000001432">
    <property type="component" value="Chromosome"/>
</dbReference>
<dbReference type="Gene3D" id="1.10.3390.10">
    <property type="entry name" value="YejL-like"/>
    <property type="match status" value="1"/>
</dbReference>
<dbReference type="HAMAP" id="MF_00816">
    <property type="entry name" value="UPF0352"/>
    <property type="match status" value="1"/>
</dbReference>
<dbReference type="InterPro" id="IPR009857">
    <property type="entry name" value="UPF0352"/>
</dbReference>
<dbReference type="InterPro" id="IPR023202">
    <property type="entry name" value="YejL_sf"/>
</dbReference>
<dbReference type="NCBIfam" id="NF010242">
    <property type="entry name" value="PRK13689.1"/>
    <property type="match status" value="1"/>
</dbReference>
<dbReference type="Pfam" id="PF07208">
    <property type="entry name" value="DUF1414"/>
    <property type="match status" value="1"/>
</dbReference>
<dbReference type="PIRSF" id="PIRSF006188">
    <property type="entry name" value="UCP006188"/>
    <property type="match status" value="1"/>
</dbReference>
<dbReference type="SUPFAM" id="SSF158651">
    <property type="entry name" value="YejL-like"/>
    <property type="match status" value="1"/>
</dbReference>
<organism>
    <name type="scientific">Actinobacillus pleuropneumoniae serotype 5b (strain L20)</name>
    <dbReference type="NCBI Taxonomy" id="416269"/>
    <lineage>
        <taxon>Bacteria</taxon>
        <taxon>Pseudomonadati</taxon>
        <taxon>Pseudomonadota</taxon>
        <taxon>Gammaproteobacteria</taxon>
        <taxon>Pasteurellales</taxon>
        <taxon>Pasteurellaceae</taxon>
        <taxon>Actinobacillus</taxon>
    </lineage>
</organism>
<reference key="1">
    <citation type="journal article" date="2008" name="J. Bacteriol.">
        <title>The complete genome sequence of Actinobacillus pleuropneumoniae L20 (serotype 5b).</title>
        <authorList>
            <person name="Foote S.J."/>
            <person name="Bosse J.T."/>
            <person name="Bouevitch A.B."/>
            <person name="Langford P.R."/>
            <person name="Young N.M."/>
            <person name="Nash J.H.E."/>
        </authorList>
    </citation>
    <scope>NUCLEOTIDE SEQUENCE [LARGE SCALE GENOMIC DNA]</scope>
    <source>
        <strain>L20</strain>
    </source>
</reference>
<feature type="chain" id="PRO_1000062296" description="UPF0352 protein APL_0584">
    <location>
        <begin position="1"/>
        <end position="73"/>
    </location>
</feature>
<evidence type="ECO:0000255" key="1">
    <source>
        <dbReference type="HAMAP-Rule" id="MF_00816"/>
    </source>
</evidence>
<name>Y584_ACTP2</name>
<protein>
    <recommendedName>
        <fullName evidence="1">UPF0352 protein APL_0584</fullName>
    </recommendedName>
</protein>
<keyword id="KW-1185">Reference proteome</keyword>
<comment type="similarity">
    <text evidence="1">Belongs to the UPF0352 family.</text>
</comment>
<gene>
    <name type="ordered locus">APL_0584</name>
</gene>
<sequence>MATQSKYQSKQFDALSGDLIAILEKHKAPVDLSLMALGNMVTNILLENVQTGAQRLALAEAFSNALKNSLKIK</sequence>